<sequence>MDPEGLQFLLPPASLAALANSWLQEDCPGLNFASLVTGSAPAQAVLWAKSPGVLAGRPFFDAIFTQLNCQVSWLLPEGSKLVPVVKVAEVRGPAHHLLLGERVALNTLARCSGIASAAATAVEVATSTGWAGHVAGTRKTTPGFRLVEKYGLLVGGAECHRYDLGGLVMVKDNHVVAAGSMEKAVLKARQAAGFPLKVEVECSSLKEALQAAEAGADLVMLDNFKPEELHPTAATLKAKFPNVSVEASGGVTLDNLPQFCGTNIDVISLGMLTQAAPALDFSLKLYAEGDIPVPHARRS</sequence>
<evidence type="ECO:0000250" key="1">
    <source>
        <dbReference type="UniProtKB" id="Q15274"/>
    </source>
</evidence>
<evidence type="ECO:0000305" key="2"/>
<organism>
    <name type="scientific">Rattus norvegicus</name>
    <name type="common">Rat</name>
    <dbReference type="NCBI Taxonomy" id="10116"/>
    <lineage>
        <taxon>Eukaryota</taxon>
        <taxon>Metazoa</taxon>
        <taxon>Chordata</taxon>
        <taxon>Craniata</taxon>
        <taxon>Vertebrata</taxon>
        <taxon>Euteleostomi</taxon>
        <taxon>Mammalia</taxon>
        <taxon>Eutheria</taxon>
        <taxon>Euarchontoglires</taxon>
        <taxon>Glires</taxon>
        <taxon>Rodentia</taxon>
        <taxon>Myomorpha</taxon>
        <taxon>Muroidea</taxon>
        <taxon>Muridae</taxon>
        <taxon>Murinae</taxon>
        <taxon>Rattus</taxon>
    </lineage>
</organism>
<protein>
    <recommendedName>
        <fullName>Nicotinate-nucleotide pyrophosphorylase [carboxylating]</fullName>
        <ecNumber>2.4.2.19</ecNumber>
    </recommendedName>
    <alternativeName>
        <fullName>Quinolinate phosphoribosyltransferase [decarboxylating]</fullName>
        <shortName>QAPRTase</shortName>
        <shortName>QPRTase</shortName>
    </alternativeName>
</protein>
<feature type="chain" id="PRO_0000245464" description="Nicotinate-nucleotide pyrophosphorylase [carboxylating]">
    <location>
        <begin position="1"/>
        <end position="299"/>
    </location>
</feature>
<feature type="region of interest" description="Important for hexamer formation" evidence="1">
    <location>
        <begin position="8"/>
        <end position="12"/>
    </location>
</feature>
<feature type="binding site" evidence="1">
    <location>
        <position position="102"/>
    </location>
    <ligand>
        <name>quinolinate</name>
        <dbReference type="ChEBI" id="CHEBI:29959"/>
    </ligand>
</feature>
<feature type="binding site" evidence="1">
    <location>
        <begin position="138"/>
        <end position="139"/>
    </location>
    <ligand>
        <name>quinolinate</name>
        <dbReference type="ChEBI" id="CHEBI:29959"/>
    </ligand>
</feature>
<feature type="binding site" evidence="1">
    <location>
        <begin position="160"/>
        <end position="161"/>
    </location>
    <ligand>
        <name>quinolinate</name>
        <dbReference type="ChEBI" id="CHEBI:29959"/>
    </ligand>
</feature>
<feature type="binding site" evidence="1">
    <location>
        <position position="171"/>
    </location>
    <ligand>
        <name>quinolinate</name>
        <dbReference type="ChEBI" id="CHEBI:29959"/>
    </ligand>
</feature>
<feature type="binding site" evidence="1">
    <location>
        <position position="201"/>
    </location>
    <ligand>
        <name>quinolinate</name>
        <dbReference type="ChEBI" id="CHEBI:29959"/>
    </ligand>
</feature>
<feature type="binding site" evidence="1">
    <location>
        <position position="222"/>
    </location>
    <ligand>
        <name>quinolinate</name>
        <dbReference type="ChEBI" id="CHEBI:29959"/>
    </ligand>
</feature>
<feature type="binding site" evidence="1">
    <location>
        <begin position="248"/>
        <end position="250"/>
    </location>
    <ligand>
        <name>quinolinate</name>
        <dbReference type="ChEBI" id="CHEBI:29959"/>
    </ligand>
</feature>
<feature type="binding site" evidence="1">
    <location>
        <position position="270"/>
    </location>
    <ligand>
        <name>quinolinate</name>
        <dbReference type="ChEBI" id="CHEBI:29959"/>
    </ligand>
</feature>
<reference key="1">
    <citation type="journal article" date="2004" name="Genome Res.">
        <title>The status, quality, and expansion of the NIH full-length cDNA project: the Mammalian Gene Collection (MGC).</title>
        <authorList>
            <consortium name="The MGC Project Team"/>
        </authorList>
    </citation>
    <scope>NUCLEOTIDE SEQUENCE [LARGE SCALE MRNA]</scope>
    <source>
        <tissue>Liver</tissue>
    </source>
</reference>
<proteinExistence type="evidence at transcript level"/>
<dbReference type="EC" id="2.4.2.19"/>
<dbReference type="EMBL" id="BC088177">
    <property type="protein sequence ID" value="AAH88177.1"/>
    <property type="molecule type" value="mRNA"/>
</dbReference>
<dbReference type="RefSeq" id="NP_001009646.1">
    <property type="nucleotide sequence ID" value="NM_001009646.1"/>
</dbReference>
<dbReference type="SMR" id="Q5I0M2"/>
<dbReference type="FunCoup" id="Q5I0M2">
    <property type="interactions" value="260"/>
</dbReference>
<dbReference type="STRING" id="10116.ENSRNOP00000023080"/>
<dbReference type="iPTMnet" id="Q5I0M2"/>
<dbReference type="PhosphoSitePlus" id="Q5I0M2"/>
<dbReference type="PaxDb" id="10116-ENSRNOP00000023080"/>
<dbReference type="Ensembl" id="ENSRNOT00000023080.6">
    <property type="protein sequence ID" value="ENSRNOP00000023080.4"/>
    <property type="gene ID" value="ENSRNOG00000016980.6"/>
</dbReference>
<dbReference type="GeneID" id="293504"/>
<dbReference type="KEGG" id="rno:293504"/>
<dbReference type="UCSC" id="RGD:1310309">
    <property type="organism name" value="rat"/>
</dbReference>
<dbReference type="AGR" id="RGD:1310309"/>
<dbReference type="CTD" id="23475"/>
<dbReference type="RGD" id="1310309">
    <property type="gene designation" value="Qprt"/>
</dbReference>
<dbReference type="eggNOG" id="KOG3008">
    <property type="taxonomic scope" value="Eukaryota"/>
</dbReference>
<dbReference type="GeneTree" id="ENSGT00390000002761"/>
<dbReference type="HOGENOM" id="CLU_039622_1_1_1"/>
<dbReference type="InParanoid" id="Q5I0M2"/>
<dbReference type="PhylomeDB" id="Q5I0M2"/>
<dbReference type="TreeFam" id="TF300845"/>
<dbReference type="Reactome" id="R-RNO-196807">
    <property type="pathway name" value="Nicotinate metabolism"/>
</dbReference>
<dbReference type="UniPathway" id="UPA00253">
    <property type="reaction ID" value="UER00331"/>
</dbReference>
<dbReference type="PRO" id="PR:Q5I0M2"/>
<dbReference type="Proteomes" id="UP000002494">
    <property type="component" value="Chromosome 1"/>
</dbReference>
<dbReference type="Bgee" id="ENSRNOG00000016980">
    <property type="expression patterns" value="Expressed in adult mammalian kidney and 17 other cell types or tissues"/>
</dbReference>
<dbReference type="GO" id="GO:1902494">
    <property type="term" value="C:catalytic complex"/>
    <property type="evidence" value="ECO:0000266"/>
    <property type="project" value="RGD"/>
</dbReference>
<dbReference type="GO" id="GO:0005737">
    <property type="term" value="C:cytoplasm"/>
    <property type="evidence" value="ECO:0000318"/>
    <property type="project" value="GO_Central"/>
</dbReference>
<dbReference type="GO" id="GO:0042802">
    <property type="term" value="F:identical protein binding"/>
    <property type="evidence" value="ECO:0000266"/>
    <property type="project" value="RGD"/>
</dbReference>
<dbReference type="GO" id="GO:0004514">
    <property type="term" value="F:nicotinate-nucleotide diphosphorylase (carboxylating) activity"/>
    <property type="evidence" value="ECO:0000314"/>
    <property type="project" value="RGD"/>
</dbReference>
<dbReference type="GO" id="GO:0009435">
    <property type="term" value="P:NAD biosynthetic process"/>
    <property type="evidence" value="ECO:0000314"/>
    <property type="project" value="RGD"/>
</dbReference>
<dbReference type="GO" id="GO:0034213">
    <property type="term" value="P:quinolinate catabolic process"/>
    <property type="evidence" value="ECO:0000266"/>
    <property type="project" value="RGD"/>
</dbReference>
<dbReference type="GO" id="GO:0046874">
    <property type="term" value="P:quinolinate metabolic process"/>
    <property type="evidence" value="ECO:0000314"/>
    <property type="project" value="RGD"/>
</dbReference>
<dbReference type="CDD" id="cd01572">
    <property type="entry name" value="QPRTase"/>
    <property type="match status" value="1"/>
</dbReference>
<dbReference type="FunFam" id="3.20.20.70:FF:000090">
    <property type="entry name" value="Nicotinate-nucleotide pyrophosphorylase [carboxylating]"/>
    <property type="match status" value="1"/>
</dbReference>
<dbReference type="FunFam" id="3.90.1170.20:FF:000004">
    <property type="entry name" value="Nicotinate-nucleotide pyrophosphorylase [carboxylating]"/>
    <property type="match status" value="1"/>
</dbReference>
<dbReference type="Gene3D" id="3.20.20.70">
    <property type="entry name" value="Aldolase class I"/>
    <property type="match status" value="1"/>
</dbReference>
<dbReference type="Gene3D" id="3.90.1170.20">
    <property type="entry name" value="Quinolinate phosphoribosyl transferase, N-terminal domain"/>
    <property type="match status" value="1"/>
</dbReference>
<dbReference type="InterPro" id="IPR013785">
    <property type="entry name" value="Aldolase_TIM"/>
</dbReference>
<dbReference type="InterPro" id="IPR004393">
    <property type="entry name" value="NadC"/>
</dbReference>
<dbReference type="InterPro" id="IPR027277">
    <property type="entry name" value="NadC/ModD"/>
</dbReference>
<dbReference type="InterPro" id="IPR036068">
    <property type="entry name" value="Nicotinate_pribotase-like_C"/>
</dbReference>
<dbReference type="InterPro" id="IPR037128">
    <property type="entry name" value="Quinolinate_PRibosylTase_N_sf"/>
</dbReference>
<dbReference type="InterPro" id="IPR002638">
    <property type="entry name" value="Quinolinate_PRibosylTrfase_C"/>
</dbReference>
<dbReference type="InterPro" id="IPR022412">
    <property type="entry name" value="Quinolinate_PRibosylTrfase_N"/>
</dbReference>
<dbReference type="NCBIfam" id="TIGR00078">
    <property type="entry name" value="nadC"/>
    <property type="match status" value="1"/>
</dbReference>
<dbReference type="PANTHER" id="PTHR32179">
    <property type="entry name" value="NICOTINATE-NUCLEOTIDE PYROPHOSPHORYLASE [CARBOXYLATING]"/>
    <property type="match status" value="1"/>
</dbReference>
<dbReference type="PANTHER" id="PTHR32179:SF3">
    <property type="entry name" value="NICOTINATE-NUCLEOTIDE PYROPHOSPHORYLASE [CARBOXYLATING]"/>
    <property type="match status" value="1"/>
</dbReference>
<dbReference type="Pfam" id="PF01729">
    <property type="entry name" value="QRPTase_C"/>
    <property type="match status" value="1"/>
</dbReference>
<dbReference type="Pfam" id="PF02749">
    <property type="entry name" value="QRPTase_N"/>
    <property type="match status" value="1"/>
</dbReference>
<dbReference type="PIRSF" id="PIRSF006250">
    <property type="entry name" value="NadC_ModD"/>
    <property type="match status" value="1"/>
</dbReference>
<dbReference type="SUPFAM" id="SSF51690">
    <property type="entry name" value="Nicotinate/Quinolinate PRTase C-terminal domain-like"/>
    <property type="match status" value="1"/>
</dbReference>
<dbReference type="SUPFAM" id="SSF54675">
    <property type="entry name" value="Nicotinate/Quinolinate PRTase N-terminal domain-like"/>
    <property type="match status" value="1"/>
</dbReference>
<accession>Q5I0M2</accession>
<name>NADC_RAT</name>
<comment type="function">
    <text evidence="1">Involved in the catabolism of quinolinic acid (QA).</text>
</comment>
<comment type="catalytic activity">
    <reaction evidence="1">
        <text>nicotinate beta-D-ribonucleotide + CO2 + diphosphate = quinolinate + 5-phospho-alpha-D-ribose 1-diphosphate + 2 H(+)</text>
        <dbReference type="Rhea" id="RHEA:12733"/>
        <dbReference type="ChEBI" id="CHEBI:15378"/>
        <dbReference type="ChEBI" id="CHEBI:16526"/>
        <dbReference type="ChEBI" id="CHEBI:29959"/>
        <dbReference type="ChEBI" id="CHEBI:33019"/>
        <dbReference type="ChEBI" id="CHEBI:57502"/>
        <dbReference type="ChEBI" id="CHEBI:58017"/>
        <dbReference type="EC" id="2.4.2.19"/>
    </reaction>
</comment>
<comment type="pathway">
    <text evidence="1">Cofactor biosynthesis; NAD(+) biosynthesis; nicotinate D-ribonucleotide from quinolinate: step 1/1.</text>
</comment>
<comment type="subunit">
    <text evidence="1">Hexamer formed by 3 homodimers.</text>
</comment>
<comment type="similarity">
    <text evidence="2">Belongs to the NadC/ModD family.</text>
</comment>
<gene>
    <name type="primary">Qprt</name>
</gene>
<keyword id="KW-0328">Glycosyltransferase</keyword>
<keyword id="KW-0662">Pyridine nucleotide biosynthesis</keyword>
<keyword id="KW-1185">Reference proteome</keyword>
<keyword id="KW-0808">Transferase</keyword>